<reference key="1">
    <citation type="journal article" date="2007" name="J. Bacteriol.">
        <title>Complete genome sequence of Haemophilus somnus (Histophilus somni) strain 129Pt and comparison to Haemophilus ducreyi 35000HP and Haemophilus influenzae Rd.</title>
        <authorList>
            <person name="Challacombe J.F."/>
            <person name="Duncan A.J."/>
            <person name="Brettin T.S."/>
            <person name="Bruce D."/>
            <person name="Chertkov O."/>
            <person name="Detter J.C."/>
            <person name="Han C.S."/>
            <person name="Misra M."/>
            <person name="Richardson P."/>
            <person name="Tapia R."/>
            <person name="Thayer N."/>
            <person name="Xie G."/>
            <person name="Inzana T.J."/>
        </authorList>
    </citation>
    <scope>NUCLEOTIDE SEQUENCE [LARGE SCALE GENOMIC DNA]</scope>
    <source>
        <strain>129Pt</strain>
    </source>
</reference>
<keyword id="KW-0963">Cytoplasm</keyword>
<keyword id="KW-0324">Glycolysis</keyword>
<keyword id="KW-0456">Lyase</keyword>
<keyword id="KW-0460">Magnesium</keyword>
<keyword id="KW-0479">Metal-binding</keyword>
<keyword id="KW-0964">Secreted</keyword>
<sequence length="433" mass="45785">MAKIVKVIGREIIDSRGNPTVEAEVHLEGGFVGLAAAPSGASTGSREALELRDGDKARFLGKGVLKAVSAVNNEIATALVGKEASNQAEIDQIMIELDGTENKSKFGANAILAVSLANAKAAAASKGMPLYAWIAELNGTPGVYSMPLPMMNIINGGEHADNNVDIQEFMIQPVGAKTLKEALRIGAEVFHNLAKVLKGKGLSTAVGDEGGFAPNLESNAAALACIKEAVEKAGYVLGKDVTLAMDCASSEFYNKENGMYEMKGEGKSFTSQEFTHYLEGLCKEYPIVSIEDGQDESDWDGFAYQTKVLGDKVQLVGDDLFVTNTKILKEGIEKGIANSILIKFNQIGSLTETLAAIKMAKDAGYTAVISHRSGETEDATIADLAVGTAAGQIKTGSMSRSDRIAKYNQLIRIEEALGEKAPFLGLKAVKGQA</sequence>
<evidence type="ECO:0000255" key="1">
    <source>
        <dbReference type="HAMAP-Rule" id="MF_00318"/>
    </source>
</evidence>
<proteinExistence type="inferred from homology"/>
<feature type="chain" id="PRO_0000267042" description="Enolase">
    <location>
        <begin position="1"/>
        <end position="433"/>
    </location>
</feature>
<feature type="active site" description="Proton donor" evidence="1">
    <location>
        <position position="209"/>
    </location>
</feature>
<feature type="active site" description="Proton acceptor" evidence="1">
    <location>
        <position position="343"/>
    </location>
</feature>
<feature type="binding site" evidence="1">
    <location>
        <position position="167"/>
    </location>
    <ligand>
        <name>(2R)-2-phosphoglycerate</name>
        <dbReference type="ChEBI" id="CHEBI:58289"/>
    </ligand>
</feature>
<feature type="binding site" evidence="1">
    <location>
        <position position="246"/>
    </location>
    <ligand>
        <name>Mg(2+)</name>
        <dbReference type="ChEBI" id="CHEBI:18420"/>
    </ligand>
</feature>
<feature type="binding site" evidence="1">
    <location>
        <position position="291"/>
    </location>
    <ligand>
        <name>Mg(2+)</name>
        <dbReference type="ChEBI" id="CHEBI:18420"/>
    </ligand>
</feature>
<feature type="binding site" evidence="1">
    <location>
        <position position="318"/>
    </location>
    <ligand>
        <name>Mg(2+)</name>
        <dbReference type="ChEBI" id="CHEBI:18420"/>
    </ligand>
</feature>
<feature type="binding site" evidence="1">
    <location>
        <position position="343"/>
    </location>
    <ligand>
        <name>(2R)-2-phosphoglycerate</name>
        <dbReference type="ChEBI" id="CHEBI:58289"/>
    </ligand>
</feature>
<feature type="binding site" evidence="1">
    <location>
        <position position="372"/>
    </location>
    <ligand>
        <name>(2R)-2-phosphoglycerate</name>
        <dbReference type="ChEBI" id="CHEBI:58289"/>
    </ligand>
</feature>
<feature type="binding site" evidence="1">
    <location>
        <position position="373"/>
    </location>
    <ligand>
        <name>(2R)-2-phosphoglycerate</name>
        <dbReference type="ChEBI" id="CHEBI:58289"/>
    </ligand>
</feature>
<feature type="binding site" evidence="1">
    <location>
        <position position="394"/>
    </location>
    <ligand>
        <name>(2R)-2-phosphoglycerate</name>
        <dbReference type="ChEBI" id="CHEBI:58289"/>
    </ligand>
</feature>
<comment type="function">
    <text evidence="1">Catalyzes the reversible conversion of 2-phosphoglycerate (2-PG) into phosphoenolpyruvate (PEP). It is essential for the degradation of carbohydrates via glycolysis.</text>
</comment>
<comment type="catalytic activity">
    <reaction evidence="1">
        <text>(2R)-2-phosphoglycerate = phosphoenolpyruvate + H2O</text>
        <dbReference type="Rhea" id="RHEA:10164"/>
        <dbReference type="ChEBI" id="CHEBI:15377"/>
        <dbReference type="ChEBI" id="CHEBI:58289"/>
        <dbReference type="ChEBI" id="CHEBI:58702"/>
        <dbReference type="EC" id="4.2.1.11"/>
    </reaction>
</comment>
<comment type="cofactor">
    <cofactor evidence="1">
        <name>Mg(2+)</name>
        <dbReference type="ChEBI" id="CHEBI:18420"/>
    </cofactor>
    <text evidence="1">Binds a second Mg(2+) ion via substrate during catalysis.</text>
</comment>
<comment type="pathway">
    <text evidence="1">Carbohydrate degradation; glycolysis; pyruvate from D-glyceraldehyde 3-phosphate: step 4/5.</text>
</comment>
<comment type="subunit">
    <text evidence="1">Component of the RNA degradosome, a multiprotein complex involved in RNA processing and mRNA degradation.</text>
</comment>
<comment type="subcellular location">
    <subcellularLocation>
        <location evidence="1">Cytoplasm</location>
    </subcellularLocation>
    <subcellularLocation>
        <location evidence="1">Secreted</location>
    </subcellularLocation>
    <subcellularLocation>
        <location evidence="1">Cell surface</location>
    </subcellularLocation>
    <text evidence="1">Fractions of enolase are present in both the cytoplasm and on the cell surface.</text>
</comment>
<comment type="similarity">
    <text evidence="1">Belongs to the enolase family.</text>
</comment>
<organism>
    <name type="scientific">Histophilus somni (strain 129Pt)</name>
    <name type="common">Haemophilus somnus</name>
    <dbReference type="NCBI Taxonomy" id="205914"/>
    <lineage>
        <taxon>Bacteria</taxon>
        <taxon>Pseudomonadati</taxon>
        <taxon>Pseudomonadota</taxon>
        <taxon>Gammaproteobacteria</taxon>
        <taxon>Pasteurellales</taxon>
        <taxon>Pasteurellaceae</taxon>
        <taxon>Histophilus</taxon>
    </lineage>
</organism>
<accession>Q0I1Z1</accession>
<protein>
    <recommendedName>
        <fullName evidence="1">Enolase</fullName>
        <ecNumber evidence="1">4.2.1.11</ecNumber>
    </recommendedName>
    <alternativeName>
        <fullName evidence="1">2-phospho-D-glycerate hydro-lyase</fullName>
    </alternativeName>
    <alternativeName>
        <fullName evidence="1">2-phosphoglycerate dehydratase</fullName>
    </alternativeName>
</protein>
<name>ENO_HISS1</name>
<gene>
    <name evidence="1" type="primary">eno</name>
    <name type="ordered locus">HS_0561</name>
</gene>
<dbReference type="EC" id="4.2.1.11" evidence="1"/>
<dbReference type="EMBL" id="CP000436">
    <property type="protein sequence ID" value="ABI24838.1"/>
    <property type="molecule type" value="Genomic_DNA"/>
</dbReference>
<dbReference type="SMR" id="Q0I1Z1"/>
<dbReference type="KEGG" id="hso:HS_0561"/>
<dbReference type="eggNOG" id="COG0148">
    <property type="taxonomic scope" value="Bacteria"/>
</dbReference>
<dbReference type="HOGENOM" id="CLU_031223_2_1_6"/>
<dbReference type="UniPathway" id="UPA00109">
    <property type="reaction ID" value="UER00187"/>
</dbReference>
<dbReference type="GO" id="GO:0009986">
    <property type="term" value="C:cell surface"/>
    <property type="evidence" value="ECO:0007669"/>
    <property type="project" value="UniProtKB-SubCell"/>
</dbReference>
<dbReference type="GO" id="GO:0005576">
    <property type="term" value="C:extracellular region"/>
    <property type="evidence" value="ECO:0007669"/>
    <property type="project" value="UniProtKB-SubCell"/>
</dbReference>
<dbReference type="GO" id="GO:0000015">
    <property type="term" value="C:phosphopyruvate hydratase complex"/>
    <property type="evidence" value="ECO:0007669"/>
    <property type="project" value="InterPro"/>
</dbReference>
<dbReference type="GO" id="GO:0000287">
    <property type="term" value="F:magnesium ion binding"/>
    <property type="evidence" value="ECO:0007669"/>
    <property type="project" value="UniProtKB-UniRule"/>
</dbReference>
<dbReference type="GO" id="GO:0004634">
    <property type="term" value="F:phosphopyruvate hydratase activity"/>
    <property type="evidence" value="ECO:0007669"/>
    <property type="project" value="UniProtKB-UniRule"/>
</dbReference>
<dbReference type="GO" id="GO:0006096">
    <property type="term" value="P:glycolytic process"/>
    <property type="evidence" value="ECO:0007669"/>
    <property type="project" value="UniProtKB-UniRule"/>
</dbReference>
<dbReference type="CDD" id="cd03313">
    <property type="entry name" value="enolase"/>
    <property type="match status" value="1"/>
</dbReference>
<dbReference type="FunFam" id="3.20.20.120:FF:000001">
    <property type="entry name" value="Enolase"/>
    <property type="match status" value="1"/>
</dbReference>
<dbReference type="FunFam" id="3.30.390.10:FF:000001">
    <property type="entry name" value="Enolase"/>
    <property type="match status" value="1"/>
</dbReference>
<dbReference type="Gene3D" id="3.20.20.120">
    <property type="entry name" value="Enolase-like C-terminal domain"/>
    <property type="match status" value="1"/>
</dbReference>
<dbReference type="Gene3D" id="3.30.390.10">
    <property type="entry name" value="Enolase-like, N-terminal domain"/>
    <property type="match status" value="1"/>
</dbReference>
<dbReference type="HAMAP" id="MF_00318">
    <property type="entry name" value="Enolase"/>
    <property type="match status" value="1"/>
</dbReference>
<dbReference type="InterPro" id="IPR000941">
    <property type="entry name" value="Enolase"/>
</dbReference>
<dbReference type="InterPro" id="IPR036849">
    <property type="entry name" value="Enolase-like_C_sf"/>
</dbReference>
<dbReference type="InterPro" id="IPR029017">
    <property type="entry name" value="Enolase-like_N"/>
</dbReference>
<dbReference type="InterPro" id="IPR020810">
    <property type="entry name" value="Enolase_C"/>
</dbReference>
<dbReference type="InterPro" id="IPR020809">
    <property type="entry name" value="Enolase_CS"/>
</dbReference>
<dbReference type="InterPro" id="IPR020811">
    <property type="entry name" value="Enolase_N"/>
</dbReference>
<dbReference type="NCBIfam" id="TIGR01060">
    <property type="entry name" value="eno"/>
    <property type="match status" value="1"/>
</dbReference>
<dbReference type="PANTHER" id="PTHR11902">
    <property type="entry name" value="ENOLASE"/>
    <property type="match status" value="1"/>
</dbReference>
<dbReference type="PANTHER" id="PTHR11902:SF1">
    <property type="entry name" value="ENOLASE"/>
    <property type="match status" value="1"/>
</dbReference>
<dbReference type="Pfam" id="PF00113">
    <property type="entry name" value="Enolase_C"/>
    <property type="match status" value="1"/>
</dbReference>
<dbReference type="Pfam" id="PF03952">
    <property type="entry name" value="Enolase_N"/>
    <property type="match status" value="1"/>
</dbReference>
<dbReference type="PIRSF" id="PIRSF001400">
    <property type="entry name" value="Enolase"/>
    <property type="match status" value="1"/>
</dbReference>
<dbReference type="PRINTS" id="PR00148">
    <property type="entry name" value="ENOLASE"/>
</dbReference>
<dbReference type="SFLD" id="SFLDS00001">
    <property type="entry name" value="Enolase"/>
    <property type="match status" value="1"/>
</dbReference>
<dbReference type="SFLD" id="SFLDF00002">
    <property type="entry name" value="enolase"/>
    <property type="match status" value="1"/>
</dbReference>
<dbReference type="SMART" id="SM01192">
    <property type="entry name" value="Enolase_C"/>
    <property type="match status" value="1"/>
</dbReference>
<dbReference type="SMART" id="SM01193">
    <property type="entry name" value="Enolase_N"/>
    <property type="match status" value="1"/>
</dbReference>
<dbReference type="SUPFAM" id="SSF51604">
    <property type="entry name" value="Enolase C-terminal domain-like"/>
    <property type="match status" value="1"/>
</dbReference>
<dbReference type="SUPFAM" id="SSF54826">
    <property type="entry name" value="Enolase N-terminal domain-like"/>
    <property type="match status" value="1"/>
</dbReference>
<dbReference type="PROSITE" id="PS00164">
    <property type="entry name" value="ENOLASE"/>
    <property type="match status" value="1"/>
</dbReference>